<name>P20L1_CHICK</name>
<gene>
    <name type="primary">PHF20L1</name>
    <name type="ORF">RCJMB04_17i16</name>
</gene>
<dbReference type="EMBL" id="AJ851684">
    <property type="protein sequence ID" value="CAH65318.1"/>
    <property type="molecule type" value="mRNA"/>
</dbReference>
<dbReference type="SMR" id="Q5F3G6"/>
<dbReference type="FunCoup" id="Q5F3G6">
    <property type="interactions" value="1447"/>
</dbReference>
<dbReference type="STRING" id="9031.ENSGALP00000049123"/>
<dbReference type="PaxDb" id="9031-ENSGALP00000026146"/>
<dbReference type="VEuPathDB" id="HostDB:geneid_420323"/>
<dbReference type="eggNOG" id="KOG1844">
    <property type="taxonomic scope" value="Eukaryota"/>
</dbReference>
<dbReference type="InParanoid" id="Q5F3G6"/>
<dbReference type="OrthoDB" id="161570at2759"/>
<dbReference type="PhylomeDB" id="Q5F3G6"/>
<dbReference type="Proteomes" id="UP000000539">
    <property type="component" value="Unassembled WGS sequence"/>
</dbReference>
<dbReference type="GO" id="GO:0044545">
    <property type="term" value="C:NSL complex"/>
    <property type="evidence" value="ECO:0000318"/>
    <property type="project" value="GO_Central"/>
</dbReference>
<dbReference type="GO" id="GO:0005634">
    <property type="term" value="C:nucleus"/>
    <property type="evidence" value="ECO:0007669"/>
    <property type="project" value="UniProtKB-SubCell"/>
</dbReference>
<dbReference type="GO" id="GO:0006357">
    <property type="term" value="P:regulation of transcription by RNA polymerase II"/>
    <property type="evidence" value="ECO:0000318"/>
    <property type="project" value="GO_Central"/>
</dbReference>
<dbReference type="CDD" id="cd20104">
    <property type="entry name" value="MBT_PHF20L1-like"/>
    <property type="match status" value="1"/>
</dbReference>
<dbReference type="CDD" id="cd20454">
    <property type="entry name" value="Tudor_PHF20L1"/>
    <property type="match status" value="1"/>
</dbReference>
<dbReference type="FunFam" id="2.30.30.140:FF:000049">
    <property type="entry name" value="PHD finger protein 20 (Predicted)"/>
    <property type="match status" value="1"/>
</dbReference>
<dbReference type="Gene3D" id="2.30.30.140">
    <property type="match status" value="2"/>
</dbReference>
<dbReference type="InterPro" id="IPR014002">
    <property type="entry name" value="Agenet_dom_plant"/>
</dbReference>
<dbReference type="InterPro" id="IPR040477">
    <property type="entry name" value="KDM4-like_Tudor"/>
</dbReference>
<dbReference type="InterPro" id="IPR043449">
    <property type="entry name" value="PHF20-like"/>
</dbReference>
<dbReference type="InterPro" id="IPR002999">
    <property type="entry name" value="Tudor"/>
</dbReference>
<dbReference type="InterPro" id="IPR047405">
    <property type="entry name" value="Tudor_PHF20L1"/>
</dbReference>
<dbReference type="PANTHER" id="PTHR15856:SF26">
    <property type="entry name" value="PHD FINGER PROTEIN 20-LIKE PROTEIN 1"/>
    <property type="match status" value="1"/>
</dbReference>
<dbReference type="PANTHER" id="PTHR15856">
    <property type="entry name" value="PHD FINGER PROTEIN 20-RELATED"/>
    <property type="match status" value="1"/>
</dbReference>
<dbReference type="Pfam" id="PF16660">
    <property type="entry name" value="PHD20L1_u1"/>
    <property type="match status" value="1"/>
</dbReference>
<dbReference type="Pfam" id="PF18104">
    <property type="entry name" value="Tudor_2"/>
    <property type="match status" value="1"/>
</dbReference>
<dbReference type="SMART" id="SM00743">
    <property type="entry name" value="Agenet"/>
    <property type="match status" value="2"/>
</dbReference>
<dbReference type="SMART" id="SM00333">
    <property type="entry name" value="TUDOR"/>
    <property type="match status" value="2"/>
</dbReference>
<dbReference type="SUPFAM" id="SSF63748">
    <property type="entry name" value="Tudor/PWWP/MBT"/>
    <property type="match status" value="2"/>
</dbReference>
<accession>Q5F3G6</accession>
<organism>
    <name type="scientific">Gallus gallus</name>
    <name type="common">Chicken</name>
    <dbReference type="NCBI Taxonomy" id="9031"/>
    <lineage>
        <taxon>Eukaryota</taxon>
        <taxon>Metazoa</taxon>
        <taxon>Chordata</taxon>
        <taxon>Craniata</taxon>
        <taxon>Vertebrata</taxon>
        <taxon>Euteleostomi</taxon>
        <taxon>Archelosauria</taxon>
        <taxon>Archosauria</taxon>
        <taxon>Dinosauria</taxon>
        <taxon>Saurischia</taxon>
        <taxon>Theropoda</taxon>
        <taxon>Coelurosauria</taxon>
        <taxon>Aves</taxon>
        <taxon>Neognathae</taxon>
        <taxon>Galloanserae</taxon>
        <taxon>Galliformes</taxon>
        <taxon>Phasianidae</taxon>
        <taxon>Phasianinae</taxon>
        <taxon>Gallus</taxon>
    </lineage>
</organism>
<evidence type="ECO:0000250" key="1">
    <source>
        <dbReference type="UniProtKB" id="A8MW92"/>
    </source>
</evidence>
<evidence type="ECO:0000250" key="2">
    <source>
        <dbReference type="UniProtKB" id="Q8CCJ9"/>
    </source>
</evidence>
<evidence type="ECO:0000256" key="3">
    <source>
        <dbReference type="SAM" id="MobiDB-lite"/>
    </source>
</evidence>
<protein>
    <recommendedName>
        <fullName>PHD finger protein 20-like protein 1</fullName>
    </recommendedName>
</protein>
<feature type="chain" id="PRO_0000336004" description="PHD finger protein 20-like protein 1">
    <location>
        <begin position="1"/>
        <end position="762"/>
    </location>
</feature>
<feature type="domain" description="Tudor 1">
    <location>
        <begin position="11"/>
        <end position="71"/>
    </location>
</feature>
<feature type="domain" description="Tudor 2">
    <location>
        <begin position="85"/>
        <end position="141"/>
    </location>
</feature>
<feature type="region of interest" description="Disordered" evidence="3">
    <location>
        <begin position="178"/>
        <end position="231"/>
    </location>
</feature>
<feature type="region of interest" description="Disordered" evidence="3">
    <location>
        <begin position="289"/>
        <end position="359"/>
    </location>
</feature>
<feature type="region of interest" description="Disordered" evidence="3">
    <location>
        <begin position="383"/>
        <end position="411"/>
    </location>
</feature>
<feature type="region of interest" description="Disordered" evidence="3">
    <location>
        <begin position="536"/>
        <end position="559"/>
    </location>
</feature>
<feature type="region of interest" description="Disordered" evidence="3">
    <location>
        <begin position="613"/>
        <end position="651"/>
    </location>
</feature>
<feature type="compositionally biased region" description="Basic and acidic residues" evidence="3">
    <location>
        <begin position="193"/>
        <end position="211"/>
    </location>
</feature>
<feature type="compositionally biased region" description="Polar residues" evidence="3">
    <location>
        <begin position="319"/>
        <end position="340"/>
    </location>
</feature>
<feature type="compositionally biased region" description="Polar residues" evidence="3">
    <location>
        <begin position="383"/>
        <end position="398"/>
    </location>
</feature>
<feature type="compositionally biased region" description="Basic residues" evidence="3">
    <location>
        <begin position="399"/>
        <end position="410"/>
    </location>
</feature>
<feature type="compositionally biased region" description="Basic and acidic residues" evidence="3">
    <location>
        <begin position="614"/>
        <end position="632"/>
    </location>
</feature>
<feature type="compositionally biased region" description="Basic residues" evidence="3">
    <location>
        <begin position="633"/>
        <end position="647"/>
    </location>
</feature>
<sequence>MSKKPPNRPGITFEIGARLEALDYLQKWYPSRIEKIDYEEGKMLVHFERWSHRYDEWIYWDSNRLRPLERPALRKEGLKDDEEFVDFKPGEEVLARWTDCRYYPAKIEAINKEGTFTVQFYDGVIRCLKRMHIKSMPEDAKGQAREREQIAPELRLVTEVEPKEDWIALVKAAAAAAAKNKAGTKPRTSANSNKDKEERKWLKVPSKKEETSTSTIMQEVQKKEEEPTSSDTFVGFPIVDVPKMAFVQAESTLSHKRKSNLGNSFQAKRARLNKITGLLASKAVVADGAEKKEGNKETAPVLEQEISPKPQIQKKNEADISSSANIQKPALLSSTLSSGKARSKKCKQESGDSSGCIKPPKSPLCPELIQVEDLTLVSQLPSSVINKTSPSQPLNSPRSYKHSQRRRRSQRLATCSLPDDSVEKVSSPSSVTDGKVFSISAQNQQSKLEVPDVAHMSLEKRGPCLPLDLSRSSEVTAPLSTESTFRNEYPSKDKEDIQMITYLSSKAVTDGRVATTASAPSSHVHALHLELPLTNSLKLPKGSSKKKRSSTSVSSEGTEIQYSVPVKEKCFESLKEKILKNVIEKDKHSEVGAVRVERKGKVEEKSSTTYDFLSGKKKEKEKEKKEKKEKDHKSKQKKKKKKKKKSKQHDYSDYEDSSVEFLDRCSSPLTRSSGSSLTLRSMFSEKNTSYQYPRAILSVDLSGENLSDMEFLDDSSTESLLLSGDEYNQDFDSTILKSLRMKTMLSMKLLDAFVNWMKKMAL</sequence>
<reference key="1">
    <citation type="journal article" date="2005" name="Genome Biol.">
        <title>Full-length cDNAs from chicken bursal lymphocytes to facilitate gene function analysis.</title>
        <authorList>
            <person name="Caldwell R.B."/>
            <person name="Kierzek A.M."/>
            <person name="Arakawa H."/>
            <person name="Bezzubov Y."/>
            <person name="Zaim J."/>
            <person name="Fiedler P."/>
            <person name="Kutter S."/>
            <person name="Blagodatski A."/>
            <person name="Kostovska D."/>
            <person name="Koter M."/>
            <person name="Plachy J."/>
            <person name="Carninci P."/>
            <person name="Hayashizaki Y."/>
            <person name="Buerstedde J.-M."/>
        </authorList>
    </citation>
    <scope>NUCLEOTIDE SEQUENCE [LARGE SCALE MRNA]</scope>
    <source>
        <strain>CB</strain>
        <tissue>Bursa of Fabricius</tissue>
    </source>
</reference>
<keyword id="KW-0539">Nucleus</keyword>
<keyword id="KW-1185">Reference proteome</keyword>
<keyword id="KW-0677">Repeat</keyword>
<comment type="function">
    <text evidence="1 2">Is a negative regulator of proteasomal degradation of methylated proteins (By similarity). Involved in the maintainance of pluripotency of embryonic stem cells (By similarity).</text>
</comment>
<comment type="subcellular location">
    <subcellularLocation>
        <location evidence="1">Nucleus</location>
    </subcellularLocation>
    <text evidence="1">Localized to the perinucleolar region.</text>
</comment>
<proteinExistence type="evidence at transcript level"/>